<dbReference type="EMBL" id="GU293136">
    <property type="protein sequence ID" value="ADB56952.1"/>
    <property type="molecule type" value="Genomic_DNA"/>
</dbReference>
<dbReference type="SMR" id="D2Y2Q9"/>
<dbReference type="ArachnoServer" id="AS001822">
    <property type="toxin name" value="U15-theraphotoxin-Hhn1r"/>
</dbReference>
<dbReference type="GO" id="GO:0005576">
    <property type="term" value="C:extracellular region"/>
    <property type="evidence" value="ECO:0007669"/>
    <property type="project" value="UniProtKB-SubCell"/>
</dbReference>
<dbReference type="GO" id="GO:0015459">
    <property type="term" value="F:potassium channel regulator activity"/>
    <property type="evidence" value="ECO:0007669"/>
    <property type="project" value="UniProtKB-KW"/>
</dbReference>
<dbReference type="GO" id="GO:0004867">
    <property type="term" value="F:serine-type endopeptidase inhibitor activity"/>
    <property type="evidence" value="ECO:0007669"/>
    <property type="project" value="UniProtKB-KW"/>
</dbReference>
<dbReference type="GO" id="GO:0090729">
    <property type="term" value="F:toxin activity"/>
    <property type="evidence" value="ECO:0007669"/>
    <property type="project" value="UniProtKB-KW"/>
</dbReference>
<dbReference type="GO" id="GO:0044562">
    <property type="term" value="P:envenomation resulting in negative regulation of voltage-gated potassium channel activity in another organism"/>
    <property type="evidence" value="ECO:0007669"/>
    <property type="project" value="UniProtKB-ARBA"/>
</dbReference>
<dbReference type="CDD" id="cd22598">
    <property type="entry name" value="Kunitz_huwentoxin"/>
    <property type="match status" value="1"/>
</dbReference>
<dbReference type="FunFam" id="4.10.410.10:FF:000020">
    <property type="entry name" value="Collagen, type VI, alpha 3"/>
    <property type="match status" value="1"/>
</dbReference>
<dbReference type="Gene3D" id="4.10.410.10">
    <property type="entry name" value="Pancreatic trypsin inhibitor Kunitz domain"/>
    <property type="match status" value="1"/>
</dbReference>
<dbReference type="InterPro" id="IPR002223">
    <property type="entry name" value="Kunitz_BPTI"/>
</dbReference>
<dbReference type="InterPro" id="IPR036880">
    <property type="entry name" value="Kunitz_BPTI_sf"/>
</dbReference>
<dbReference type="PANTHER" id="PTHR47247">
    <property type="entry name" value="KUNITZ-TYPE PROTEASE INHIBITOR 2"/>
    <property type="match status" value="1"/>
</dbReference>
<dbReference type="PANTHER" id="PTHR47247:SF1">
    <property type="entry name" value="KUNITZ-TYPE PROTEASE INHIBITOR 2"/>
    <property type="match status" value="1"/>
</dbReference>
<dbReference type="Pfam" id="PF00014">
    <property type="entry name" value="Kunitz_BPTI"/>
    <property type="match status" value="1"/>
</dbReference>
<dbReference type="PRINTS" id="PR00759">
    <property type="entry name" value="BASICPTASE"/>
</dbReference>
<dbReference type="SMART" id="SM00131">
    <property type="entry name" value="KU"/>
    <property type="match status" value="1"/>
</dbReference>
<dbReference type="SUPFAM" id="SSF57362">
    <property type="entry name" value="BPTI-like"/>
    <property type="match status" value="1"/>
</dbReference>
<dbReference type="PROSITE" id="PS50279">
    <property type="entry name" value="BPTI_KUNITZ_2"/>
    <property type="match status" value="1"/>
</dbReference>
<evidence type="ECO:0000250" key="1"/>
<evidence type="ECO:0000250" key="2">
    <source>
        <dbReference type="UniProtKB" id="P68425"/>
    </source>
</evidence>
<evidence type="ECO:0000255" key="3"/>
<evidence type="ECO:0000255" key="4">
    <source>
        <dbReference type="PROSITE-ProRule" id="PRU00031"/>
    </source>
</evidence>
<evidence type="ECO:0000305" key="5"/>
<evidence type="ECO:0000305" key="6">
    <source>
    </source>
</evidence>
<name>VKTR1_CYRHA</name>
<comment type="function">
    <text evidence="2">Serine protease inhibitor that inhibits trypsin at a molar ratio of 1:1.</text>
</comment>
<comment type="subcellular location">
    <subcellularLocation>
        <location evidence="6">Secreted</location>
    </subcellularLocation>
</comment>
<comment type="tissue specificity">
    <text evidence="6">Expressed by the venom gland.</text>
</comment>
<comment type="similarity">
    <text evidence="5">Belongs to the venom Kunitz-type family. 01 (intermediate) subfamily.</text>
</comment>
<sequence>MGIARILSAVLFLSVLFVVTFPTLLSADHHDGRTDTCRLPSDRGRCKASFERWYFNGTTCTKFVYGGYGGNDNRFPTEKACMKRCAKA</sequence>
<reference key="1">
    <citation type="journal article" date="2010" name="J. Proteome Res.">
        <title>Molecular diversification of peptide toxins from the tarantula Haplopelma hainanum (Ornithoctonus hainana) venom based on transcriptomic, peptidomic, and genomic analyses.</title>
        <authorList>
            <person name="Tang X."/>
            <person name="Zhang Y."/>
            <person name="Hu W."/>
            <person name="Xu D."/>
            <person name="Tao H."/>
            <person name="Yang X."/>
            <person name="Li Y."/>
            <person name="Jiang L."/>
            <person name="Liang S."/>
        </authorList>
    </citation>
    <scope>NUCLEOTIDE SEQUENCE [LARGE SCALE GENOMIC DNA]</scope>
    <source>
        <tissue>Venom gland</tissue>
    </source>
</reference>
<keyword id="KW-1015">Disulfide bond</keyword>
<keyword id="KW-0646">Protease inhibitor</keyword>
<keyword id="KW-0964">Secreted</keyword>
<keyword id="KW-0722">Serine protease inhibitor</keyword>
<keyword id="KW-0732">Signal</keyword>
<protein>
    <recommendedName>
        <fullName>Kunitz-type U15-theraphotoxin-Hhn1r</fullName>
        <shortName>U15-TRTX-Hhn1r</shortName>
    </recommendedName>
    <alternativeName>
        <fullName>Kunitz-type serine protease inhibitor hainantoxin-XI-18</fullName>
        <shortName>HNTX-XI-18</shortName>
    </alternativeName>
</protein>
<feature type="signal peptide" evidence="3">
    <location>
        <begin position="1"/>
        <end position="27"/>
    </location>
</feature>
<feature type="propeptide" id="PRO_0000401012" evidence="1">
    <location>
        <begin position="28"/>
        <end position="33"/>
    </location>
</feature>
<feature type="peptide" id="PRO_0000401013" description="Kunitz-type U15-theraphotoxin-Hhn1r">
    <location>
        <begin position="34"/>
        <end position="88"/>
    </location>
</feature>
<feature type="domain" description="BPTI/Kunitz inhibitor" evidence="4">
    <location>
        <begin position="37"/>
        <end position="85"/>
    </location>
</feature>
<feature type="site" description="Reactive bond for trypsin" evidence="1">
    <location>
        <begin position="47"/>
        <end position="48"/>
    </location>
</feature>
<feature type="disulfide bond" evidence="4">
    <location>
        <begin position="37"/>
        <end position="85"/>
    </location>
</feature>
<feature type="disulfide bond" evidence="4">
    <location>
        <begin position="60"/>
        <end position="81"/>
    </location>
</feature>
<accession>D2Y2Q9</accession>
<proteinExistence type="inferred from homology"/>
<organism>
    <name type="scientific">Cyriopagopus hainanus</name>
    <name type="common">Chinese bird spider</name>
    <name type="synonym">Haplopelma hainanum</name>
    <dbReference type="NCBI Taxonomy" id="209901"/>
    <lineage>
        <taxon>Eukaryota</taxon>
        <taxon>Metazoa</taxon>
        <taxon>Ecdysozoa</taxon>
        <taxon>Arthropoda</taxon>
        <taxon>Chelicerata</taxon>
        <taxon>Arachnida</taxon>
        <taxon>Araneae</taxon>
        <taxon>Mygalomorphae</taxon>
        <taxon>Theraphosidae</taxon>
        <taxon>Haplopelma</taxon>
    </lineage>
</organism>